<proteinExistence type="inferred from homology"/>
<name>RF1_NITEU</name>
<reference key="1">
    <citation type="journal article" date="2003" name="J. Bacteriol.">
        <title>Complete genome sequence of the ammonia-oxidizing bacterium and obligate chemolithoautotroph Nitrosomonas europaea.</title>
        <authorList>
            <person name="Chain P."/>
            <person name="Lamerdin J.E."/>
            <person name="Larimer F.W."/>
            <person name="Regala W."/>
            <person name="Lao V."/>
            <person name="Land M.L."/>
            <person name="Hauser L."/>
            <person name="Hooper A.B."/>
            <person name="Klotz M.G."/>
            <person name="Norton J."/>
            <person name="Sayavedra-Soto L.A."/>
            <person name="Arciero D.M."/>
            <person name="Hommes N.G."/>
            <person name="Whittaker M.M."/>
            <person name="Arp D.J."/>
        </authorList>
    </citation>
    <scope>NUCLEOTIDE SEQUENCE [LARGE SCALE GENOMIC DNA]</scope>
    <source>
        <strain>ATCC 19718 / CIP 103999 / KCTC 2705 / NBRC 14298</strain>
    </source>
</reference>
<organism>
    <name type="scientific">Nitrosomonas europaea (strain ATCC 19718 / CIP 103999 / KCTC 2705 / NBRC 14298)</name>
    <dbReference type="NCBI Taxonomy" id="228410"/>
    <lineage>
        <taxon>Bacteria</taxon>
        <taxon>Pseudomonadati</taxon>
        <taxon>Pseudomonadota</taxon>
        <taxon>Betaproteobacteria</taxon>
        <taxon>Nitrosomonadales</taxon>
        <taxon>Nitrosomonadaceae</taxon>
        <taxon>Nitrosomonas</taxon>
    </lineage>
</organism>
<feature type="chain" id="PRO_0000177715" description="Peptide chain release factor 1">
    <location>
        <begin position="1"/>
        <end position="359"/>
    </location>
</feature>
<feature type="modified residue" description="N5-methylglutamine" evidence="1">
    <location>
        <position position="235"/>
    </location>
</feature>
<sequence>MNKGIIDQLTRLSMRLGELDKLLSTEKITADLDNYRKLSRERAEIEPVTELYRTYQQVEQDLATAREMSSDPQFRDFAEAEIEADRRKLTNIETEILRQLLPKDPNDERNIFLEIRAGTGGDESALFAGDLFRMYSRYAEREGWQVEVVSQNPSEVGGYKEIIVRIIGHGAYSRLKFESGGHRVQRVPATETQGRVHTSTCTVAVLPEADEIADITLNPADLRIDTFRASGAGGQHINKTDSAVRITHLPTGIVAECQEGRSQHKNKAQAMSVLIARILDKQVRAQQAEQAATRKSLVGSGERSERIRTYNFPQGRITDHRINLTLYKIEQIIDGELDELCSALAAEHQAAQLAAMTEK</sequence>
<accession>Q82TH4</accession>
<protein>
    <recommendedName>
        <fullName evidence="1">Peptide chain release factor 1</fullName>
        <shortName evidence="1">RF-1</shortName>
    </recommendedName>
</protein>
<gene>
    <name evidence="1" type="primary">prfA</name>
    <name type="ordered locus">NE1913</name>
</gene>
<comment type="function">
    <text evidence="1">Peptide chain release factor 1 directs the termination of translation in response to the peptide chain termination codons UAG and UAA.</text>
</comment>
<comment type="subcellular location">
    <subcellularLocation>
        <location evidence="1">Cytoplasm</location>
    </subcellularLocation>
</comment>
<comment type="PTM">
    <text evidence="1">Methylated by PrmC. Methylation increases the termination efficiency of RF1.</text>
</comment>
<comment type="similarity">
    <text evidence="1">Belongs to the prokaryotic/mitochondrial release factor family.</text>
</comment>
<evidence type="ECO:0000255" key="1">
    <source>
        <dbReference type="HAMAP-Rule" id="MF_00093"/>
    </source>
</evidence>
<dbReference type="EMBL" id="AL954747">
    <property type="protein sequence ID" value="CAD85824.1"/>
    <property type="molecule type" value="Genomic_DNA"/>
</dbReference>
<dbReference type="RefSeq" id="WP_011112450.1">
    <property type="nucleotide sequence ID" value="NC_004757.1"/>
</dbReference>
<dbReference type="SMR" id="Q82TH4"/>
<dbReference type="STRING" id="228410.NE1913"/>
<dbReference type="GeneID" id="87105071"/>
<dbReference type="KEGG" id="neu:NE1913"/>
<dbReference type="eggNOG" id="COG0216">
    <property type="taxonomic scope" value="Bacteria"/>
</dbReference>
<dbReference type="HOGENOM" id="CLU_036856_0_1_4"/>
<dbReference type="OrthoDB" id="9806673at2"/>
<dbReference type="PhylomeDB" id="Q82TH4"/>
<dbReference type="Proteomes" id="UP000001416">
    <property type="component" value="Chromosome"/>
</dbReference>
<dbReference type="GO" id="GO:0005737">
    <property type="term" value="C:cytoplasm"/>
    <property type="evidence" value="ECO:0007669"/>
    <property type="project" value="UniProtKB-SubCell"/>
</dbReference>
<dbReference type="GO" id="GO:0016149">
    <property type="term" value="F:translation release factor activity, codon specific"/>
    <property type="evidence" value="ECO:0007669"/>
    <property type="project" value="UniProtKB-UniRule"/>
</dbReference>
<dbReference type="FunFam" id="3.30.160.20:FF:000004">
    <property type="entry name" value="Peptide chain release factor 1"/>
    <property type="match status" value="1"/>
</dbReference>
<dbReference type="FunFam" id="3.30.70.1660:FF:000002">
    <property type="entry name" value="Peptide chain release factor 1"/>
    <property type="match status" value="1"/>
</dbReference>
<dbReference type="FunFam" id="3.30.70.1660:FF:000004">
    <property type="entry name" value="Peptide chain release factor 1"/>
    <property type="match status" value="1"/>
</dbReference>
<dbReference type="Gene3D" id="3.30.160.20">
    <property type="match status" value="1"/>
</dbReference>
<dbReference type="Gene3D" id="3.30.70.1660">
    <property type="match status" value="2"/>
</dbReference>
<dbReference type="Gene3D" id="6.10.140.1950">
    <property type="match status" value="1"/>
</dbReference>
<dbReference type="HAMAP" id="MF_00093">
    <property type="entry name" value="Rel_fac_1"/>
    <property type="match status" value="1"/>
</dbReference>
<dbReference type="InterPro" id="IPR005139">
    <property type="entry name" value="PCRF"/>
</dbReference>
<dbReference type="InterPro" id="IPR000352">
    <property type="entry name" value="Pep_chain_release_fac_I"/>
</dbReference>
<dbReference type="InterPro" id="IPR045853">
    <property type="entry name" value="Pep_chain_release_fac_I_sf"/>
</dbReference>
<dbReference type="InterPro" id="IPR050057">
    <property type="entry name" value="Prokaryotic/Mito_RF"/>
</dbReference>
<dbReference type="InterPro" id="IPR004373">
    <property type="entry name" value="RF-1"/>
</dbReference>
<dbReference type="NCBIfam" id="TIGR00019">
    <property type="entry name" value="prfA"/>
    <property type="match status" value="1"/>
</dbReference>
<dbReference type="NCBIfam" id="NF001859">
    <property type="entry name" value="PRK00591.1"/>
    <property type="match status" value="1"/>
</dbReference>
<dbReference type="PANTHER" id="PTHR43804">
    <property type="entry name" value="LD18447P"/>
    <property type="match status" value="1"/>
</dbReference>
<dbReference type="PANTHER" id="PTHR43804:SF7">
    <property type="entry name" value="LD18447P"/>
    <property type="match status" value="1"/>
</dbReference>
<dbReference type="Pfam" id="PF03462">
    <property type="entry name" value="PCRF"/>
    <property type="match status" value="1"/>
</dbReference>
<dbReference type="Pfam" id="PF00472">
    <property type="entry name" value="RF-1"/>
    <property type="match status" value="1"/>
</dbReference>
<dbReference type="SMART" id="SM00937">
    <property type="entry name" value="PCRF"/>
    <property type="match status" value="1"/>
</dbReference>
<dbReference type="SUPFAM" id="SSF75620">
    <property type="entry name" value="Release factor"/>
    <property type="match status" value="1"/>
</dbReference>
<dbReference type="PROSITE" id="PS00745">
    <property type="entry name" value="RF_PROK_I"/>
    <property type="match status" value="1"/>
</dbReference>
<keyword id="KW-0963">Cytoplasm</keyword>
<keyword id="KW-0488">Methylation</keyword>
<keyword id="KW-0648">Protein biosynthesis</keyword>
<keyword id="KW-1185">Reference proteome</keyword>